<organism>
    <name type="scientific">Clostridium acetobutylicum (strain ATCC 824 / DSM 792 / JCM 1419 / IAM 19013 / LMG 5710 / NBRC 13948 / NRRL B-527 / VKM B-1787 / 2291 / W)</name>
    <dbReference type="NCBI Taxonomy" id="272562"/>
    <lineage>
        <taxon>Bacteria</taxon>
        <taxon>Bacillati</taxon>
        <taxon>Bacillota</taxon>
        <taxon>Clostridia</taxon>
        <taxon>Eubacteriales</taxon>
        <taxon>Clostridiaceae</taxon>
        <taxon>Clostridium</taxon>
    </lineage>
</organism>
<accession>Q97MU2</accession>
<feature type="chain" id="PRO_0000120401" description="Glutamate-1-semialdehyde 2,1-aminomutase">
    <location>
        <begin position="1"/>
        <end position="422"/>
    </location>
</feature>
<feature type="modified residue" description="N6-(pyridoxal phosphate)lysine" evidence="1">
    <location>
        <position position="264"/>
    </location>
</feature>
<gene>
    <name evidence="1" type="primary">hemL</name>
    <name type="ordered locus">CA_C0099</name>
</gene>
<reference key="1">
    <citation type="journal article" date="2001" name="J. Bacteriol.">
        <title>Genome sequence and comparative analysis of the solvent-producing bacterium Clostridium acetobutylicum.</title>
        <authorList>
            <person name="Noelling J."/>
            <person name="Breton G."/>
            <person name="Omelchenko M.V."/>
            <person name="Makarova K.S."/>
            <person name="Zeng Q."/>
            <person name="Gibson R."/>
            <person name="Lee H.M."/>
            <person name="Dubois J."/>
            <person name="Qiu D."/>
            <person name="Hitti J."/>
            <person name="Wolf Y.I."/>
            <person name="Tatusov R.L."/>
            <person name="Sabathe F."/>
            <person name="Doucette-Stamm L.A."/>
            <person name="Soucaille P."/>
            <person name="Daly M.J."/>
            <person name="Bennett G.N."/>
            <person name="Koonin E.V."/>
            <person name="Smith D.R."/>
        </authorList>
    </citation>
    <scope>NUCLEOTIDE SEQUENCE [LARGE SCALE GENOMIC DNA]</scope>
    <source>
        <strain>ATCC 824 / DSM 792 / JCM 1419 / IAM 19013 / LMG 5710 / NBRC 13948 / NRRL B-527 / VKM B-1787 / 2291 / W</strain>
    </source>
</reference>
<keyword id="KW-0963">Cytoplasm</keyword>
<keyword id="KW-0413">Isomerase</keyword>
<keyword id="KW-0627">Porphyrin biosynthesis</keyword>
<keyword id="KW-0663">Pyridoxal phosphate</keyword>
<keyword id="KW-1185">Reference proteome</keyword>
<comment type="catalytic activity">
    <reaction evidence="1">
        <text>(S)-4-amino-5-oxopentanoate = 5-aminolevulinate</text>
        <dbReference type="Rhea" id="RHEA:14265"/>
        <dbReference type="ChEBI" id="CHEBI:57501"/>
        <dbReference type="ChEBI" id="CHEBI:356416"/>
        <dbReference type="EC" id="5.4.3.8"/>
    </reaction>
</comment>
<comment type="cofactor">
    <cofactor evidence="1">
        <name>pyridoxal 5'-phosphate</name>
        <dbReference type="ChEBI" id="CHEBI:597326"/>
    </cofactor>
</comment>
<comment type="pathway">
    <text evidence="1">Porphyrin-containing compound metabolism; protoporphyrin-IX biosynthesis; 5-aminolevulinate from L-glutamyl-tRNA(Glu): step 2/2.</text>
</comment>
<comment type="subunit">
    <text evidence="1">Homodimer.</text>
</comment>
<comment type="subcellular location">
    <subcellularLocation>
        <location evidence="1">Cytoplasm</location>
    </subcellularLocation>
</comment>
<comment type="similarity">
    <text evidence="1">Belongs to the class-III pyridoxal-phosphate-dependent aminotransferase family. HemL subfamily.</text>
</comment>
<evidence type="ECO:0000255" key="1">
    <source>
        <dbReference type="HAMAP-Rule" id="MF_00375"/>
    </source>
</evidence>
<name>GSA_CLOAB</name>
<dbReference type="EC" id="5.4.3.8" evidence="1"/>
<dbReference type="EMBL" id="AE001437">
    <property type="protein sequence ID" value="AAK78084.1"/>
    <property type="molecule type" value="Genomic_DNA"/>
</dbReference>
<dbReference type="PIR" id="A96912">
    <property type="entry name" value="A96912"/>
</dbReference>
<dbReference type="RefSeq" id="NP_346744.1">
    <property type="nucleotide sequence ID" value="NC_003030.1"/>
</dbReference>
<dbReference type="RefSeq" id="WP_010963426.1">
    <property type="nucleotide sequence ID" value="NC_003030.1"/>
</dbReference>
<dbReference type="SMR" id="Q97MU2"/>
<dbReference type="STRING" id="272562.CA_C0099"/>
<dbReference type="GeneID" id="44996581"/>
<dbReference type="KEGG" id="cac:CA_C0099"/>
<dbReference type="PATRIC" id="fig|272562.8.peg.282"/>
<dbReference type="eggNOG" id="COG0001">
    <property type="taxonomic scope" value="Bacteria"/>
</dbReference>
<dbReference type="HOGENOM" id="CLU_016922_1_5_9"/>
<dbReference type="OrthoDB" id="9807885at2"/>
<dbReference type="UniPathway" id="UPA00251">
    <property type="reaction ID" value="UER00317"/>
</dbReference>
<dbReference type="Proteomes" id="UP000000814">
    <property type="component" value="Chromosome"/>
</dbReference>
<dbReference type="GO" id="GO:0005737">
    <property type="term" value="C:cytoplasm"/>
    <property type="evidence" value="ECO:0007669"/>
    <property type="project" value="UniProtKB-SubCell"/>
</dbReference>
<dbReference type="GO" id="GO:0042286">
    <property type="term" value="F:glutamate-1-semialdehyde 2,1-aminomutase activity"/>
    <property type="evidence" value="ECO:0007669"/>
    <property type="project" value="UniProtKB-UniRule"/>
</dbReference>
<dbReference type="GO" id="GO:0030170">
    <property type="term" value="F:pyridoxal phosphate binding"/>
    <property type="evidence" value="ECO:0007669"/>
    <property type="project" value="InterPro"/>
</dbReference>
<dbReference type="GO" id="GO:0008483">
    <property type="term" value="F:transaminase activity"/>
    <property type="evidence" value="ECO:0007669"/>
    <property type="project" value="InterPro"/>
</dbReference>
<dbReference type="GO" id="GO:0006782">
    <property type="term" value="P:protoporphyrinogen IX biosynthetic process"/>
    <property type="evidence" value="ECO:0007669"/>
    <property type="project" value="UniProtKB-UniRule"/>
</dbReference>
<dbReference type="CDD" id="cd00610">
    <property type="entry name" value="OAT_like"/>
    <property type="match status" value="1"/>
</dbReference>
<dbReference type="FunFam" id="3.40.640.10:FF:000021">
    <property type="entry name" value="Glutamate-1-semialdehyde 2,1-aminomutase"/>
    <property type="match status" value="1"/>
</dbReference>
<dbReference type="Gene3D" id="3.90.1150.10">
    <property type="entry name" value="Aspartate Aminotransferase, domain 1"/>
    <property type="match status" value="1"/>
</dbReference>
<dbReference type="Gene3D" id="3.40.640.10">
    <property type="entry name" value="Type I PLP-dependent aspartate aminotransferase-like (Major domain)"/>
    <property type="match status" value="1"/>
</dbReference>
<dbReference type="HAMAP" id="MF_00375">
    <property type="entry name" value="HemL_aminotrans_3"/>
    <property type="match status" value="1"/>
</dbReference>
<dbReference type="InterPro" id="IPR004639">
    <property type="entry name" value="4pyrrol_synth_GluAld_NH2Trfase"/>
</dbReference>
<dbReference type="InterPro" id="IPR005814">
    <property type="entry name" value="Aminotrans_3"/>
</dbReference>
<dbReference type="InterPro" id="IPR049704">
    <property type="entry name" value="Aminotrans_3_PPA_site"/>
</dbReference>
<dbReference type="InterPro" id="IPR015424">
    <property type="entry name" value="PyrdxlP-dep_Trfase"/>
</dbReference>
<dbReference type="InterPro" id="IPR015421">
    <property type="entry name" value="PyrdxlP-dep_Trfase_major"/>
</dbReference>
<dbReference type="InterPro" id="IPR015422">
    <property type="entry name" value="PyrdxlP-dep_Trfase_small"/>
</dbReference>
<dbReference type="NCBIfam" id="TIGR00713">
    <property type="entry name" value="hemL"/>
    <property type="match status" value="1"/>
</dbReference>
<dbReference type="NCBIfam" id="NF000818">
    <property type="entry name" value="PRK00062.1"/>
    <property type="match status" value="1"/>
</dbReference>
<dbReference type="PANTHER" id="PTHR43713">
    <property type="entry name" value="GLUTAMATE-1-SEMIALDEHYDE 2,1-AMINOMUTASE"/>
    <property type="match status" value="1"/>
</dbReference>
<dbReference type="PANTHER" id="PTHR43713:SF3">
    <property type="entry name" value="GLUTAMATE-1-SEMIALDEHYDE 2,1-AMINOMUTASE 1, CHLOROPLASTIC-RELATED"/>
    <property type="match status" value="1"/>
</dbReference>
<dbReference type="Pfam" id="PF00202">
    <property type="entry name" value="Aminotran_3"/>
    <property type="match status" value="1"/>
</dbReference>
<dbReference type="SUPFAM" id="SSF53383">
    <property type="entry name" value="PLP-dependent transferases"/>
    <property type="match status" value="1"/>
</dbReference>
<dbReference type="PROSITE" id="PS00600">
    <property type="entry name" value="AA_TRANSFER_CLASS_3"/>
    <property type="match status" value="1"/>
</dbReference>
<proteinExistence type="inferred from homology"/>
<protein>
    <recommendedName>
        <fullName evidence="1">Glutamate-1-semialdehyde 2,1-aminomutase</fullName>
        <shortName evidence="1">GSA</shortName>
        <ecNumber evidence="1">5.4.3.8</ecNumber>
    </recommendedName>
    <alternativeName>
        <fullName evidence="1">Glutamate-1-semialdehyde aminotransferase</fullName>
        <shortName evidence="1">GSA-AT</shortName>
    </alternativeName>
</protein>
<sequence length="422" mass="46615">MTNKEIFEESKEYMPGGVNSPVRAYMDLNIDPPIIKSGKDSHLFDEEGKEYIDFIEAWGPMILGHKNQKVLNEVKEVLDEGVGFGAPTSLELKLAKYICTTVDNVEMIRMVNSGTEATMSAVKLARGYTKRDKIIKFAGCYHGHFDGFLVEAGSGVLTQNIPGSPGVPKGSIENTLIAEYNNVESVEVLFNKYKDEIAAVIIEPVAGNMGVIPAKKEFLVKLRELCTENQSILIFDEVMSGFRVAYKGAQSLYGVTPDLITFAKIMGGGFPCGAYGGKKEIMKQLSPLGPVYQAGTMSGNPVVMAAGYASLRQLHENPEYYTYMDKLGSKLEAGILEISKEKGIPLVVNRCVNMMTIFFNKAKEVKSYSDAKASDTKMFARFAEHMITSGIYVPPSQFEAMFLGVKHTEEDIERFLDVMKKL</sequence>